<reference key="1">
    <citation type="journal article" date="2001" name="Lancet">
        <title>Whole genome sequencing of meticillin-resistant Staphylococcus aureus.</title>
        <authorList>
            <person name="Kuroda M."/>
            <person name="Ohta T."/>
            <person name="Uchiyama I."/>
            <person name="Baba T."/>
            <person name="Yuzawa H."/>
            <person name="Kobayashi I."/>
            <person name="Cui L."/>
            <person name="Oguchi A."/>
            <person name="Aoki K."/>
            <person name="Nagai Y."/>
            <person name="Lian J.-Q."/>
            <person name="Ito T."/>
            <person name="Kanamori M."/>
            <person name="Matsumaru H."/>
            <person name="Maruyama A."/>
            <person name="Murakami H."/>
            <person name="Hosoyama A."/>
            <person name="Mizutani-Ui Y."/>
            <person name="Takahashi N.K."/>
            <person name="Sawano T."/>
            <person name="Inoue R."/>
            <person name="Kaito C."/>
            <person name="Sekimizu K."/>
            <person name="Hirakawa H."/>
            <person name="Kuhara S."/>
            <person name="Goto S."/>
            <person name="Yabuzaki J."/>
            <person name="Kanehisa M."/>
            <person name="Yamashita A."/>
            <person name="Oshima K."/>
            <person name="Furuya K."/>
            <person name="Yoshino C."/>
            <person name="Shiba T."/>
            <person name="Hattori M."/>
            <person name="Ogasawara N."/>
            <person name="Hayashi H."/>
            <person name="Hiramatsu K."/>
        </authorList>
    </citation>
    <scope>NUCLEOTIDE SEQUENCE [LARGE SCALE GENOMIC DNA]</scope>
    <source>
        <strain>N315</strain>
    </source>
</reference>
<reference key="2">
    <citation type="submission" date="2007-10" db="UniProtKB">
        <title>Shotgun proteomic analysis of total and membrane protein extracts of S. aureus strain N315.</title>
        <authorList>
            <person name="Vaezzadeh A.R."/>
            <person name="Deshusses J."/>
            <person name="Lescuyer P."/>
            <person name="Hochstrasser D.F."/>
        </authorList>
    </citation>
    <scope>IDENTIFICATION BY MASS SPECTROMETRY [LARGE SCALE ANALYSIS]</scope>
    <source>
        <strain>N315</strain>
    </source>
</reference>
<keyword id="KW-0326">Glycosidase</keyword>
<keyword id="KW-0378">Hydrolase</keyword>
<gene>
    <name evidence="1" type="primary">lacG</name>
    <name type="ordered locus">SA1991</name>
</gene>
<organism>
    <name type="scientific">Staphylococcus aureus (strain N315)</name>
    <dbReference type="NCBI Taxonomy" id="158879"/>
    <lineage>
        <taxon>Bacteria</taxon>
        <taxon>Bacillati</taxon>
        <taxon>Bacillota</taxon>
        <taxon>Bacilli</taxon>
        <taxon>Bacillales</taxon>
        <taxon>Staphylococcaceae</taxon>
        <taxon>Staphylococcus</taxon>
    </lineage>
</organism>
<feature type="chain" id="PRO_0000063886" description="6-phospho-beta-galactosidase">
    <location>
        <begin position="1"/>
        <end position="470"/>
    </location>
</feature>
<feature type="active site" description="Proton donor" evidence="1">
    <location>
        <position position="160"/>
    </location>
</feature>
<feature type="active site" description="Nucleophile" evidence="1">
    <location>
        <position position="375"/>
    </location>
</feature>
<feature type="binding site" evidence="1">
    <location>
        <position position="19"/>
    </location>
    <ligand>
        <name>D-galactose 6-phosphate</name>
        <dbReference type="ChEBI" id="CHEBI:91004"/>
    </ligand>
</feature>
<feature type="binding site" evidence="1">
    <location>
        <position position="116"/>
    </location>
    <ligand>
        <name>D-galactose 6-phosphate</name>
        <dbReference type="ChEBI" id="CHEBI:91004"/>
    </ligand>
</feature>
<feature type="binding site" evidence="1">
    <location>
        <position position="159"/>
    </location>
    <ligand>
        <name>D-galactose 6-phosphate</name>
        <dbReference type="ChEBI" id="CHEBI:91004"/>
    </ligand>
</feature>
<feature type="binding site" evidence="1">
    <location>
        <position position="160"/>
    </location>
    <ligand>
        <name>D-galactose 6-phosphate</name>
        <dbReference type="ChEBI" id="CHEBI:91004"/>
    </ligand>
</feature>
<feature type="binding site" evidence="1">
    <location>
        <position position="297"/>
    </location>
    <ligand>
        <name>D-galactose 6-phosphate</name>
        <dbReference type="ChEBI" id="CHEBI:91004"/>
    </ligand>
</feature>
<feature type="binding site" evidence="1">
    <location>
        <position position="430"/>
    </location>
    <ligand>
        <name>D-galactose 6-phosphate</name>
        <dbReference type="ChEBI" id="CHEBI:91004"/>
    </ligand>
</feature>
<feature type="binding site" evidence="1">
    <location>
        <position position="431"/>
    </location>
    <ligand>
        <name>D-galactose 6-phosphate</name>
        <dbReference type="ChEBI" id="CHEBI:91004"/>
    </ligand>
</feature>
<feature type="binding site" evidence="1">
    <location>
        <position position="437"/>
    </location>
    <ligand>
        <name>D-galactose 6-phosphate</name>
        <dbReference type="ChEBI" id="CHEBI:91004"/>
    </ligand>
</feature>
<feature type="binding site" evidence="1">
    <location>
        <position position="439"/>
    </location>
    <ligand>
        <name>D-galactose 6-phosphate</name>
        <dbReference type="ChEBI" id="CHEBI:91004"/>
    </ligand>
</feature>
<proteinExistence type="evidence at protein level"/>
<protein>
    <recommendedName>
        <fullName evidence="1">6-phospho-beta-galactosidase</fullName>
        <ecNumber evidence="1">3.2.1.85</ecNumber>
    </recommendedName>
    <alternativeName>
        <fullName evidence="1">Beta-D-phosphogalactoside galactohydrolase</fullName>
        <shortName evidence="1">PGALase</shortName>
    </alternativeName>
    <alternativeName>
        <fullName evidence="1">P-beta-Gal</fullName>
        <shortName evidence="1">PBG</shortName>
    </alternativeName>
</protein>
<name>LACG_STAAN</name>
<accession>P67768</accession>
<accession>Q99S78</accession>
<dbReference type="EC" id="3.2.1.85" evidence="1"/>
<dbReference type="EMBL" id="BA000018">
    <property type="protein sequence ID" value="BAB43281.1"/>
    <property type="molecule type" value="Genomic_DNA"/>
</dbReference>
<dbReference type="PIR" id="H90014">
    <property type="entry name" value="H90014"/>
</dbReference>
<dbReference type="RefSeq" id="WP_000169224.1">
    <property type="nucleotide sequence ID" value="NC_002745.2"/>
</dbReference>
<dbReference type="SMR" id="P67768"/>
<dbReference type="CAZy" id="GH1">
    <property type="family name" value="Glycoside Hydrolase Family 1"/>
</dbReference>
<dbReference type="EnsemblBacteria" id="BAB43281">
    <property type="protein sequence ID" value="BAB43281"/>
    <property type="gene ID" value="BAB43281"/>
</dbReference>
<dbReference type="KEGG" id="sau:SA1991"/>
<dbReference type="HOGENOM" id="CLU_001859_1_3_9"/>
<dbReference type="UniPathway" id="UPA00542">
    <property type="reaction ID" value="UER00605"/>
</dbReference>
<dbReference type="GO" id="GO:0005829">
    <property type="term" value="C:cytosol"/>
    <property type="evidence" value="ECO:0007669"/>
    <property type="project" value="TreeGrafter"/>
</dbReference>
<dbReference type="GO" id="GO:0033920">
    <property type="term" value="F:6-phospho-beta-galactosidase activity"/>
    <property type="evidence" value="ECO:0007669"/>
    <property type="project" value="UniProtKB-UniRule"/>
</dbReference>
<dbReference type="GO" id="GO:0008422">
    <property type="term" value="F:beta-glucosidase activity"/>
    <property type="evidence" value="ECO:0007669"/>
    <property type="project" value="TreeGrafter"/>
</dbReference>
<dbReference type="GO" id="GO:0019512">
    <property type="term" value="P:lactose catabolic process via tagatose-6-phosphate"/>
    <property type="evidence" value="ECO:0007669"/>
    <property type="project" value="InterPro"/>
</dbReference>
<dbReference type="FunFam" id="3.20.20.80:FF:000004">
    <property type="entry name" value="Beta-glucosidase 6-phospho-beta-glucosidase"/>
    <property type="match status" value="1"/>
</dbReference>
<dbReference type="Gene3D" id="3.20.20.80">
    <property type="entry name" value="Glycosidases"/>
    <property type="match status" value="1"/>
</dbReference>
<dbReference type="HAMAP" id="MF_01574">
    <property type="entry name" value="LacG"/>
    <property type="match status" value="1"/>
</dbReference>
<dbReference type="InterPro" id="IPR005928">
    <property type="entry name" value="6P-beta-galactosidase"/>
</dbReference>
<dbReference type="InterPro" id="IPR001360">
    <property type="entry name" value="Glyco_hydro_1"/>
</dbReference>
<dbReference type="InterPro" id="IPR018120">
    <property type="entry name" value="Glyco_hydro_1_AS"/>
</dbReference>
<dbReference type="InterPro" id="IPR033132">
    <property type="entry name" value="Glyco_hydro_1_N_CS"/>
</dbReference>
<dbReference type="InterPro" id="IPR017853">
    <property type="entry name" value="Glycoside_hydrolase_SF"/>
</dbReference>
<dbReference type="NCBIfam" id="TIGR01233">
    <property type="entry name" value="lacG"/>
    <property type="match status" value="1"/>
</dbReference>
<dbReference type="NCBIfam" id="NF010036">
    <property type="entry name" value="PRK13511.1"/>
    <property type="match status" value="1"/>
</dbReference>
<dbReference type="PANTHER" id="PTHR10353">
    <property type="entry name" value="GLYCOSYL HYDROLASE"/>
    <property type="match status" value="1"/>
</dbReference>
<dbReference type="PANTHER" id="PTHR10353:SF36">
    <property type="entry name" value="LP05116P"/>
    <property type="match status" value="1"/>
</dbReference>
<dbReference type="Pfam" id="PF00232">
    <property type="entry name" value="Glyco_hydro_1"/>
    <property type="match status" value="1"/>
</dbReference>
<dbReference type="PRINTS" id="PR00131">
    <property type="entry name" value="GLHYDRLASE1"/>
</dbReference>
<dbReference type="SUPFAM" id="SSF51445">
    <property type="entry name" value="(Trans)glycosidases"/>
    <property type="match status" value="1"/>
</dbReference>
<dbReference type="PROSITE" id="PS00572">
    <property type="entry name" value="GLYCOSYL_HYDROL_F1_1"/>
    <property type="match status" value="1"/>
</dbReference>
<dbReference type="PROSITE" id="PS00653">
    <property type="entry name" value="GLYCOSYL_HYDROL_F1_2"/>
    <property type="match status" value="1"/>
</dbReference>
<sequence length="470" mass="54565">MTKTLPEDFIFGGATAAYQAEGATNTDGKGRVAWDTYLEENYWYTAEPASDFYNRYPVDLELSEKFGVNGIRISIAWSRIFPNGYGEVNPKGVEYYHKLFAECHKRHVEPFVTLHHFDTPEVLHKDGDFLNRKTIDYFVDYAEYCFKEFPEVKYWTTFNEIGPIGDGQYLVGKFPPGIKYDFEKVFQSHHNMMVAHARAVKLFKDGGYQGEIGVVHALPTKYPFDPSNPEDVRAAELEDIIHNKFILDATYLGKYSRETMEGVQHILSVNGGKLNITDEDYAILDAAKDLNDFLGINYYMSDWMRGYDGESEITHNATGDKGGSKYQLKGVGQREFDVDVPRTDWDWMIYPQGLYDQIMRVVKDYPNYHKIYITENGLGYKDEFIESEKTVHDDARIDYVRQHLNVIADAIKDGANVKGYFIWSLMDVFSWSNGYEKRYGLFYVDFETQERYPKKSAYWYKELAETKEIK</sequence>
<comment type="catalytic activity">
    <reaction evidence="1">
        <text>a 6-phospho-beta-D-galactoside + H2O = D-galactose 6-phosphate + an alcohol</text>
        <dbReference type="Rhea" id="RHEA:24568"/>
        <dbReference type="ChEBI" id="CHEBI:15377"/>
        <dbReference type="ChEBI" id="CHEBI:30879"/>
        <dbReference type="ChEBI" id="CHEBI:58534"/>
        <dbReference type="ChEBI" id="CHEBI:91004"/>
        <dbReference type="EC" id="3.2.1.85"/>
    </reaction>
</comment>
<comment type="pathway">
    <text evidence="1">Carbohydrate metabolism; lactose degradation; D-galactose 6-phosphate and beta-D-glucose from lactose 6-phosphate: step 1/1.</text>
</comment>
<comment type="similarity">
    <text evidence="1">Belongs to the glycosyl hydrolase 1 family.</text>
</comment>
<evidence type="ECO:0000255" key="1">
    <source>
        <dbReference type="HAMAP-Rule" id="MF_01574"/>
    </source>
</evidence>